<gene>
    <name evidence="1" type="primary">glmS</name>
    <name type="synonym">mamA</name>
    <name type="ordered locus">TDE_1023</name>
</gene>
<reference key="1">
    <citation type="journal article" date="2004" name="Proc. Natl. Acad. Sci. U.S.A.">
        <title>Comparison of the genome of the oral pathogen Treponema denticola with other spirochete genomes.</title>
        <authorList>
            <person name="Seshadri R."/>
            <person name="Myers G.S.A."/>
            <person name="Tettelin H."/>
            <person name="Eisen J.A."/>
            <person name="Heidelberg J.F."/>
            <person name="Dodson R.J."/>
            <person name="Davidsen T.M."/>
            <person name="DeBoy R.T."/>
            <person name="Fouts D.E."/>
            <person name="Haft D.H."/>
            <person name="Selengut J."/>
            <person name="Ren Q."/>
            <person name="Brinkac L.M."/>
            <person name="Madupu R."/>
            <person name="Kolonay J.F."/>
            <person name="Durkin S.A."/>
            <person name="Daugherty S.C."/>
            <person name="Shetty J."/>
            <person name="Shvartsbeyn A."/>
            <person name="Gebregeorgis E."/>
            <person name="Geer K."/>
            <person name="Tsegaye G."/>
            <person name="Malek J.A."/>
            <person name="Ayodeji B."/>
            <person name="Shatsman S."/>
            <person name="McLeod M.P."/>
            <person name="Smajs D."/>
            <person name="Howell J.K."/>
            <person name="Pal S."/>
            <person name="Amin A."/>
            <person name="Vashisth P."/>
            <person name="McNeill T.Z."/>
            <person name="Xiang Q."/>
            <person name="Sodergren E."/>
            <person name="Baca E."/>
            <person name="Weinstock G.M."/>
            <person name="Norris S.J."/>
            <person name="Fraser C.M."/>
            <person name="Paulsen I.T."/>
        </authorList>
    </citation>
    <scope>NUCLEOTIDE SEQUENCE [LARGE SCALE GENOMIC DNA]</scope>
    <source>
        <strain>ATCC 35405 / DSM 14222 / CIP 103919 / JCM 8153 / KCTC 15104</strain>
    </source>
</reference>
<name>GMSS_TREDE</name>
<protein>
    <recommendedName>
        <fullName evidence="1">Glutamate mutase sigma subunit</fullName>
        <ecNumber evidence="1">5.4.99.1</ecNumber>
    </recommendedName>
    <alternativeName>
        <fullName evidence="1">Glutamate mutase S chain</fullName>
    </alternativeName>
    <alternativeName>
        <fullName evidence="1">Glutamate mutase small subunit</fullName>
    </alternativeName>
    <alternativeName>
        <fullName evidence="1">Methylaspartate mutase</fullName>
    </alternativeName>
</protein>
<sequence>MARKIKLVLGVIGSDCHAVGNKILDYSLTEAGFEVTNIGVLSPQEDFINAALETNADAILVSSLYGQGELDCKGLREKCDEAGLKGIKLFVGGNIVVGKQNFDEVHKRFTAMGFDHVYPPGTPVETTIKDLHADFPDHA</sequence>
<comment type="function">
    <text evidence="1">Catalyzes the carbon skeleton rearrangement of L-glutamate to L-threo-3-methylaspartate ((2S,3S)-3-methylaspartate).</text>
</comment>
<comment type="catalytic activity">
    <reaction evidence="1">
        <text>(2S,3S)-3-methyl-L-aspartate = L-glutamate</text>
        <dbReference type="Rhea" id="RHEA:12857"/>
        <dbReference type="ChEBI" id="CHEBI:29985"/>
        <dbReference type="ChEBI" id="CHEBI:58724"/>
        <dbReference type="EC" id="5.4.99.1"/>
    </reaction>
</comment>
<comment type="cofactor">
    <cofactor evidence="1">
        <name>adenosylcob(III)alamin</name>
        <dbReference type="ChEBI" id="CHEBI:18408"/>
    </cofactor>
</comment>
<comment type="pathway">
    <text evidence="1">Amino-acid degradation; L-glutamate degradation via mesaconate pathway; acetate and pyruvate from L-glutamate: step 1/4.</text>
</comment>
<comment type="subunit">
    <text evidence="1">Heterotetramer composed of 2 epsilon subunits (GlmE) and 2 sigma subunits (GlmS). GlmE exists as a homodimer and GlmS as a monomer.</text>
</comment>
<comment type="similarity">
    <text evidence="1">Belongs to the methylaspartate mutase GlmS subunit family.</text>
</comment>
<proteinExistence type="inferred from homology"/>
<keyword id="KW-0846">Cobalamin</keyword>
<keyword id="KW-0170">Cobalt</keyword>
<keyword id="KW-0413">Isomerase</keyword>
<keyword id="KW-0479">Metal-binding</keyword>
<keyword id="KW-1185">Reference proteome</keyword>
<dbReference type="EC" id="5.4.99.1" evidence="1"/>
<dbReference type="EMBL" id="AE017226">
    <property type="protein sequence ID" value="AAS11512.1"/>
    <property type="molecule type" value="Genomic_DNA"/>
</dbReference>
<dbReference type="RefSeq" id="NP_971631.1">
    <property type="nucleotide sequence ID" value="NC_002967.9"/>
</dbReference>
<dbReference type="RefSeq" id="WP_002670492.1">
    <property type="nucleotide sequence ID" value="NC_002967.9"/>
</dbReference>
<dbReference type="SMR" id="P61191"/>
<dbReference type="STRING" id="243275.TDE_1023"/>
<dbReference type="PaxDb" id="243275-TDE_1023"/>
<dbReference type="GeneID" id="2741502"/>
<dbReference type="KEGG" id="tde:TDE_1023"/>
<dbReference type="PATRIC" id="fig|243275.7.peg.985"/>
<dbReference type="eggNOG" id="COG2185">
    <property type="taxonomic scope" value="Bacteria"/>
</dbReference>
<dbReference type="HOGENOM" id="CLU_136705_0_0_12"/>
<dbReference type="OrthoDB" id="9791348at2"/>
<dbReference type="UniPathway" id="UPA00561">
    <property type="reaction ID" value="UER00617"/>
</dbReference>
<dbReference type="Proteomes" id="UP000008212">
    <property type="component" value="Chromosome"/>
</dbReference>
<dbReference type="GO" id="GO:0031419">
    <property type="term" value="F:cobalamin binding"/>
    <property type="evidence" value="ECO:0007669"/>
    <property type="project" value="UniProtKB-KW"/>
</dbReference>
<dbReference type="GO" id="GO:0046872">
    <property type="term" value="F:metal ion binding"/>
    <property type="evidence" value="ECO:0007669"/>
    <property type="project" value="UniProtKB-KW"/>
</dbReference>
<dbReference type="GO" id="GO:0050097">
    <property type="term" value="F:methylaspartate mutase activity"/>
    <property type="evidence" value="ECO:0007669"/>
    <property type="project" value="UniProtKB-UniRule"/>
</dbReference>
<dbReference type="GO" id="GO:0019670">
    <property type="term" value="P:anaerobic glutamate catabolic process"/>
    <property type="evidence" value="ECO:0007669"/>
    <property type="project" value="InterPro"/>
</dbReference>
<dbReference type="GO" id="GO:0019553">
    <property type="term" value="P:glutamate catabolic process via L-citramalate"/>
    <property type="evidence" value="ECO:0007669"/>
    <property type="project" value="UniProtKB-UniRule"/>
</dbReference>
<dbReference type="CDD" id="cd02072">
    <property type="entry name" value="Glm_B12_BD"/>
    <property type="match status" value="1"/>
</dbReference>
<dbReference type="Gene3D" id="3.40.50.280">
    <property type="entry name" value="Cobalamin-binding domain"/>
    <property type="match status" value="1"/>
</dbReference>
<dbReference type="HAMAP" id="MF_00526">
    <property type="entry name" value="Me_Asp_mutase_S"/>
    <property type="match status" value="1"/>
</dbReference>
<dbReference type="InterPro" id="IPR006159">
    <property type="entry name" value="Acid_CoA_mut_C"/>
</dbReference>
<dbReference type="InterPro" id="IPR006158">
    <property type="entry name" value="Cobalamin-bd"/>
</dbReference>
<dbReference type="InterPro" id="IPR036724">
    <property type="entry name" value="Cobalamin-bd_sf"/>
</dbReference>
<dbReference type="InterPro" id="IPR006394">
    <property type="entry name" value="GlmS"/>
</dbReference>
<dbReference type="NCBIfam" id="TIGR00640">
    <property type="entry name" value="acid_CoA_mut_C"/>
    <property type="match status" value="1"/>
</dbReference>
<dbReference type="NCBIfam" id="TIGR01501">
    <property type="entry name" value="MthylAspMutase"/>
    <property type="match status" value="1"/>
</dbReference>
<dbReference type="NCBIfam" id="NF002612">
    <property type="entry name" value="PRK02261.1"/>
    <property type="match status" value="1"/>
</dbReference>
<dbReference type="Pfam" id="PF02310">
    <property type="entry name" value="B12-binding"/>
    <property type="match status" value="1"/>
</dbReference>
<dbReference type="SUPFAM" id="SSF52242">
    <property type="entry name" value="Cobalamin (vitamin B12)-binding domain"/>
    <property type="match status" value="1"/>
</dbReference>
<dbReference type="PROSITE" id="PS51332">
    <property type="entry name" value="B12_BINDING"/>
    <property type="match status" value="1"/>
</dbReference>
<evidence type="ECO:0000255" key="1">
    <source>
        <dbReference type="HAMAP-Rule" id="MF_00526"/>
    </source>
</evidence>
<organism>
    <name type="scientific">Treponema denticola (strain ATCC 35405 / DSM 14222 / CIP 103919 / JCM 8153 / KCTC 15104)</name>
    <dbReference type="NCBI Taxonomy" id="243275"/>
    <lineage>
        <taxon>Bacteria</taxon>
        <taxon>Pseudomonadati</taxon>
        <taxon>Spirochaetota</taxon>
        <taxon>Spirochaetia</taxon>
        <taxon>Spirochaetales</taxon>
        <taxon>Treponemataceae</taxon>
        <taxon>Treponema</taxon>
    </lineage>
</organism>
<accession>P61191</accession>
<feature type="chain" id="PRO_0000216448" description="Glutamate mutase sigma subunit">
    <location>
        <begin position="1"/>
        <end position="139"/>
    </location>
</feature>
<feature type="domain" description="B12-binding" evidence="1">
    <location>
        <begin position="4"/>
        <end position="139"/>
    </location>
</feature>
<feature type="binding site" evidence="1">
    <location>
        <begin position="14"/>
        <end position="18"/>
    </location>
    <ligand>
        <name>adenosylcob(III)alamin</name>
        <dbReference type="ChEBI" id="CHEBI:18408"/>
    </ligand>
</feature>
<feature type="binding site" description="axial binding residue" evidence="1">
    <location>
        <position position="17"/>
    </location>
    <ligand>
        <name>adenosylcob(III)alamin</name>
        <dbReference type="ChEBI" id="CHEBI:18408"/>
    </ligand>
    <ligandPart>
        <name>Co</name>
        <dbReference type="ChEBI" id="CHEBI:27638"/>
    </ligandPart>
</feature>
<feature type="binding site" evidence="1">
    <location>
        <begin position="62"/>
        <end position="64"/>
    </location>
    <ligand>
        <name>adenosylcob(III)alamin</name>
        <dbReference type="ChEBI" id="CHEBI:18408"/>
    </ligand>
</feature>
<feature type="binding site" evidence="1">
    <location>
        <begin position="94"/>
        <end position="98"/>
    </location>
    <ligand>
        <name>adenosylcob(III)alamin</name>
        <dbReference type="ChEBI" id="CHEBI:18408"/>
    </ligand>
</feature>